<evidence type="ECO:0000256" key="1">
    <source>
        <dbReference type="SAM" id="MobiDB-lite"/>
    </source>
</evidence>
<evidence type="ECO:0000269" key="2">
    <source>
    </source>
</evidence>
<evidence type="ECO:0000269" key="3">
    <source>
    </source>
</evidence>
<evidence type="ECO:0000269" key="4">
    <source>
    </source>
</evidence>
<evidence type="ECO:0000269" key="5">
    <source>
    </source>
</evidence>
<evidence type="ECO:0000269" key="6">
    <source>
    </source>
</evidence>
<evidence type="ECO:0000269" key="7">
    <source>
    </source>
</evidence>
<evidence type="ECO:0000269" key="8">
    <source>
    </source>
</evidence>
<evidence type="ECO:0000269" key="9">
    <source>
    </source>
</evidence>
<evidence type="ECO:0000269" key="10">
    <source>
    </source>
</evidence>
<evidence type="ECO:0000269" key="11">
    <source>
    </source>
</evidence>
<evidence type="ECO:0000303" key="12">
    <source>
    </source>
</evidence>
<evidence type="ECO:0000303" key="13">
    <source>
    </source>
</evidence>
<evidence type="ECO:0000305" key="14"/>
<evidence type="ECO:0007744" key="15">
    <source>
        <dbReference type="PDB" id="4UI9"/>
    </source>
</evidence>
<evidence type="ECO:0007744" key="16">
    <source>
        <dbReference type="PDB" id="5A31"/>
    </source>
</evidence>
<evidence type="ECO:0007744" key="17">
    <source>
    </source>
</evidence>
<evidence type="ECO:0007744" key="18">
    <source>
    </source>
</evidence>
<evidence type="ECO:0007744" key="19">
    <source>
    </source>
</evidence>
<evidence type="ECO:0007744" key="20">
    <source>
    </source>
</evidence>
<evidence type="ECO:0007744" key="21">
    <source>
    </source>
</evidence>
<evidence type="ECO:0007829" key="22">
    <source>
        <dbReference type="PDB" id="3HYM"/>
    </source>
</evidence>
<evidence type="ECO:0007829" key="23">
    <source>
        <dbReference type="PDB" id="5G05"/>
    </source>
</evidence>
<evidence type="ECO:0007829" key="24">
    <source>
        <dbReference type="PDB" id="6Q6G"/>
    </source>
</evidence>
<evidence type="ECO:0007829" key="25">
    <source>
        <dbReference type="PDB" id="6Q6H"/>
    </source>
</evidence>
<evidence type="ECO:0007829" key="26">
    <source>
        <dbReference type="PDB" id="8TAU"/>
    </source>
</evidence>
<evidence type="ECO:0007829" key="27">
    <source>
        <dbReference type="PDB" id="9GAW"/>
    </source>
</evidence>
<gene>
    <name type="primary">CDC16</name>
    <name type="synonym">ANAPC6</name>
</gene>
<keyword id="KW-0002">3D-structure</keyword>
<keyword id="KW-0025">Alternative splicing</keyword>
<keyword id="KW-0131">Cell cycle</keyword>
<keyword id="KW-0132">Cell division</keyword>
<keyword id="KW-0963">Cytoplasm</keyword>
<keyword id="KW-0206">Cytoskeleton</keyword>
<keyword id="KW-0498">Mitosis</keyword>
<keyword id="KW-0597">Phosphoprotein</keyword>
<keyword id="KW-1267">Proteomics identification</keyword>
<keyword id="KW-1185">Reference proteome</keyword>
<keyword id="KW-0677">Repeat</keyword>
<keyword id="KW-0802">TPR repeat</keyword>
<keyword id="KW-0833">Ubl conjugation pathway</keyword>
<protein>
    <recommendedName>
        <fullName>Cell division cycle protein 16 homolog</fullName>
    </recommendedName>
    <alternativeName>
        <fullName>Anaphase-promoting complex subunit 6</fullName>
        <shortName>APC6</shortName>
    </alternativeName>
    <alternativeName>
        <fullName>CDC16 homolog</fullName>
        <shortName>CDC16Hs</shortName>
    </alternativeName>
    <alternativeName>
        <fullName>Cyclosome subunit 6</fullName>
    </alternativeName>
</protein>
<reference key="1">
    <citation type="journal article" date="1995" name="Cell">
        <title>CDC27Hs colocalizes with CDC16Hs to the centrosome and mitotic spindle and is essential for the metaphase to anaphase transition.</title>
        <authorList>
            <person name="Tugendreich S."/>
            <person name="Tomkiel J."/>
            <person name="Earnshaw W."/>
            <person name="Hieter P."/>
        </authorList>
    </citation>
    <scope>NUCLEOTIDE SEQUENCE [MRNA] (ISOFORM 2)</scope>
    <scope>SUBCELLULAR LOCATION</scope>
    <source>
        <tissue>Brain</tissue>
    </source>
</reference>
<reference key="2">
    <citation type="submission" date="1999-07" db="EMBL/GenBank/DDBJ databases">
        <title>The differential splicing variants of human CDC16 mRNA.</title>
        <authorList>
            <person name="Zhou P.K."/>
            <person name="Rigaud O."/>
        </authorList>
    </citation>
    <scope>NUCLEOTIDE SEQUENCE (ISOFORM 3)</scope>
</reference>
<reference key="3">
    <citation type="submission" date="2004-04" db="EMBL/GenBank/DDBJ databases">
        <authorList>
            <consortium name="NIEHS SNPs program"/>
        </authorList>
    </citation>
    <scope>NUCLEOTIDE SEQUENCE [GENOMIC DNA]</scope>
</reference>
<reference key="4">
    <citation type="journal article" date="2004" name="Nature">
        <title>The DNA sequence and analysis of human chromosome 13.</title>
        <authorList>
            <person name="Dunham A."/>
            <person name="Matthews L.H."/>
            <person name="Burton J."/>
            <person name="Ashurst J.L."/>
            <person name="Howe K.L."/>
            <person name="Ashcroft K.J."/>
            <person name="Beare D.M."/>
            <person name="Burford D.C."/>
            <person name="Hunt S.E."/>
            <person name="Griffiths-Jones S."/>
            <person name="Jones M.C."/>
            <person name="Keenan S.J."/>
            <person name="Oliver K."/>
            <person name="Scott C.E."/>
            <person name="Ainscough R."/>
            <person name="Almeida J.P."/>
            <person name="Ambrose K.D."/>
            <person name="Andrews D.T."/>
            <person name="Ashwell R.I.S."/>
            <person name="Babbage A.K."/>
            <person name="Bagguley C.L."/>
            <person name="Bailey J."/>
            <person name="Bannerjee R."/>
            <person name="Barlow K.F."/>
            <person name="Bates K."/>
            <person name="Beasley H."/>
            <person name="Bird C.P."/>
            <person name="Bray-Allen S."/>
            <person name="Brown A.J."/>
            <person name="Brown J.Y."/>
            <person name="Burrill W."/>
            <person name="Carder C."/>
            <person name="Carter N.P."/>
            <person name="Chapman J.C."/>
            <person name="Clamp M.E."/>
            <person name="Clark S.Y."/>
            <person name="Clarke G."/>
            <person name="Clee C.M."/>
            <person name="Clegg S.C."/>
            <person name="Cobley V."/>
            <person name="Collins J.E."/>
            <person name="Corby N."/>
            <person name="Coville G.J."/>
            <person name="Deloukas P."/>
            <person name="Dhami P."/>
            <person name="Dunham I."/>
            <person name="Dunn M."/>
            <person name="Earthrowl M.E."/>
            <person name="Ellington A.G."/>
            <person name="Faulkner L."/>
            <person name="Frankish A.G."/>
            <person name="Frankland J."/>
            <person name="French L."/>
            <person name="Garner P."/>
            <person name="Garnett J."/>
            <person name="Gilbert J.G.R."/>
            <person name="Gilson C.J."/>
            <person name="Ghori J."/>
            <person name="Grafham D.V."/>
            <person name="Gribble S.M."/>
            <person name="Griffiths C."/>
            <person name="Hall R.E."/>
            <person name="Hammond S."/>
            <person name="Harley J.L."/>
            <person name="Hart E.A."/>
            <person name="Heath P.D."/>
            <person name="Howden P.J."/>
            <person name="Huckle E.J."/>
            <person name="Hunt P.J."/>
            <person name="Hunt A.R."/>
            <person name="Johnson C."/>
            <person name="Johnson D."/>
            <person name="Kay M."/>
            <person name="Kimberley A.M."/>
            <person name="King A."/>
            <person name="Laird G.K."/>
            <person name="Langford C.J."/>
            <person name="Lawlor S."/>
            <person name="Leongamornlert D.A."/>
            <person name="Lloyd D.M."/>
            <person name="Lloyd C."/>
            <person name="Loveland J.E."/>
            <person name="Lovell J."/>
            <person name="Martin S."/>
            <person name="Mashreghi-Mohammadi M."/>
            <person name="McLaren S.J."/>
            <person name="McMurray A."/>
            <person name="Milne S."/>
            <person name="Moore M.J.F."/>
            <person name="Nickerson T."/>
            <person name="Palmer S.A."/>
            <person name="Pearce A.V."/>
            <person name="Peck A.I."/>
            <person name="Pelan S."/>
            <person name="Phillimore B."/>
            <person name="Porter K.M."/>
            <person name="Rice C.M."/>
            <person name="Searle S."/>
            <person name="Sehra H.K."/>
            <person name="Shownkeen R."/>
            <person name="Skuce C.D."/>
            <person name="Smith M."/>
            <person name="Steward C.A."/>
            <person name="Sycamore N."/>
            <person name="Tester J."/>
            <person name="Thomas D.W."/>
            <person name="Tracey A."/>
            <person name="Tromans A."/>
            <person name="Tubby B."/>
            <person name="Wall M."/>
            <person name="Wallis J.M."/>
            <person name="West A.P."/>
            <person name="Whitehead S.L."/>
            <person name="Willey D.L."/>
            <person name="Wilming L."/>
            <person name="Wray P.W."/>
            <person name="Wright M.W."/>
            <person name="Young L."/>
            <person name="Coulson A."/>
            <person name="Durbin R.M."/>
            <person name="Hubbard T."/>
            <person name="Sulston J.E."/>
            <person name="Beck S."/>
            <person name="Bentley D.R."/>
            <person name="Rogers J."/>
            <person name="Ross M.T."/>
        </authorList>
    </citation>
    <scope>NUCLEOTIDE SEQUENCE [LARGE SCALE GENOMIC DNA]</scope>
</reference>
<reference key="5">
    <citation type="submission" date="2005-07" db="EMBL/GenBank/DDBJ databases">
        <authorList>
            <person name="Mural R.J."/>
            <person name="Istrail S."/>
            <person name="Sutton G.G."/>
            <person name="Florea L."/>
            <person name="Halpern A.L."/>
            <person name="Mobarry C.M."/>
            <person name="Lippert R."/>
            <person name="Walenz B."/>
            <person name="Shatkay H."/>
            <person name="Dew I."/>
            <person name="Miller J.R."/>
            <person name="Flanigan M.J."/>
            <person name="Edwards N.J."/>
            <person name="Bolanos R."/>
            <person name="Fasulo D."/>
            <person name="Halldorsson B.V."/>
            <person name="Hannenhalli S."/>
            <person name="Turner R."/>
            <person name="Yooseph S."/>
            <person name="Lu F."/>
            <person name="Nusskern D.R."/>
            <person name="Shue B.C."/>
            <person name="Zheng X.H."/>
            <person name="Zhong F."/>
            <person name="Delcher A.L."/>
            <person name="Huson D.H."/>
            <person name="Kravitz S.A."/>
            <person name="Mouchard L."/>
            <person name="Reinert K."/>
            <person name="Remington K.A."/>
            <person name="Clark A.G."/>
            <person name="Waterman M.S."/>
            <person name="Eichler E.E."/>
            <person name="Adams M.D."/>
            <person name="Hunkapiller M.W."/>
            <person name="Myers E.W."/>
            <person name="Venter J.C."/>
        </authorList>
    </citation>
    <scope>NUCLEOTIDE SEQUENCE [LARGE SCALE GENOMIC DNA]</scope>
</reference>
<reference key="6">
    <citation type="journal article" date="2004" name="Genome Res.">
        <title>The status, quality, and expansion of the NIH full-length cDNA project: the Mammalian Gene Collection (MGC).</title>
        <authorList>
            <consortium name="The MGC Project Team"/>
        </authorList>
    </citation>
    <scope>NUCLEOTIDE SEQUENCE [LARGE SCALE MRNA] (ISOFORMS 1 AND 4)</scope>
    <source>
        <tissue>Lung</tissue>
        <tissue>Skin</tissue>
    </source>
</reference>
<reference key="7">
    <citation type="journal article" date="1997" name="J. Biol. Chem.">
        <title>The serine/threonine phosphatase PP5 interacts with CDC16 and CDC27, two tetratricopeptide repeat-containing subunits of the anaphase-promoting complex.</title>
        <authorList>
            <person name="Ollendorff V."/>
            <person name="Donoghue D.J."/>
        </authorList>
    </citation>
    <scope>INTERACTION WITH PPP5C</scope>
</reference>
<reference key="8">
    <citation type="journal article" date="1998" name="J. Cell Biol.">
        <title>Mammalian p55CDC mediates association of the spindle checkpoint protein Mad2 with the cyclosome/anaphase-promoting complex, and is involved in regulating anaphase onset and late mitotic events.</title>
        <authorList>
            <person name="Kallio M."/>
            <person name="Weinstein J."/>
            <person name="Daum J.R."/>
            <person name="Burke D.J."/>
            <person name="Gorbsky G.J."/>
        </authorList>
    </citation>
    <scope>INTERACTION WITH CDC20</scope>
</reference>
<reference key="9">
    <citation type="journal article" date="2003" name="EMBO J.">
        <title>Mitotic regulation of the human anaphase-promoting complex by phosphorylation.</title>
        <authorList>
            <person name="Kraft C."/>
            <person name="Herzog F."/>
            <person name="Gieffers C."/>
            <person name="Mechtler K."/>
            <person name="Hagting A."/>
            <person name="Pines J."/>
            <person name="Peters J.-M."/>
        </authorList>
    </citation>
    <scope>PHOSPHORYLATION AT SER-112; SER-490; SER-560; THR-581; SER-595 AND THR-599</scope>
</reference>
<reference key="10">
    <citation type="journal article" date="2006" name="Nat. Biotechnol.">
        <title>A probability-based approach for high-throughput protein phosphorylation analysis and site localization.</title>
        <authorList>
            <person name="Beausoleil S.A."/>
            <person name="Villen J."/>
            <person name="Gerber S.A."/>
            <person name="Rush J."/>
            <person name="Gygi S.P."/>
        </authorList>
    </citation>
    <scope>PHOSPHORYLATION [LARGE SCALE ANALYSIS] AT THR-581</scope>
    <scope>IDENTIFICATION BY MASS SPECTROMETRY [LARGE SCALE ANALYSIS]</scope>
    <source>
        <tissue>Cervix carcinoma</tissue>
    </source>
</reference>
<reference key="11">
    <citation type="journal article" date="2008" name="Cell">
        <title>Mechanism of ubiquitin-chain formation by the human anaphase-promoting complex.</title>
        <authorList>
            <person name="Jin L."/>
            <person name="Williamson A."/>
            <person name="Banerjee S."/>
            <person name="Philipp I."/>
            <person name="Rape M."/>
        </authorList>
    </citation>
    <scope>FUNCTION OF THE APC/C</scope>
</reference>
<reference key="12">
    <citation type="journal article" date="2008" name="Mol. Cell">
        <title>Kinase-selective enrichment enables quantitative phosphoproteomics of the kinome across the cell cycle.</title>
        <authorList>
            <person name="Daub H."/>
            <person name="Olsen J.V."/>
            <person name="Bairlein M."/>
            <person name="Gnad F."/>
            <person name="Oppermann F.S."/>
            <person name="Korner R."/>
            <person name="Greff Z."/>
            <person name="Keri G."/>
            <person name="Stemmann O."/>
            <person name="Mann M."/>
        </authorList>
    </citation>
    <scope>PHOSPHORYLATION [LARGE SCALE ANALYSIS] AT SER-560 AND THR-581</scope>
    <scope>IDENTIFICATION BY MASS SPECTROMETRY [LARGE SCALE ANALYSIS]</scope>
    <source>
        <tissue>Cervix carcinoma</tissue>
    </source>
</reference>
<reference key="13">
    <citation type="journal article" date="2008" name="Proc. Natl. Acad. Sci. U.S.A.">
        <title>A quantitative atlas of mitotic phosphorylation.</title>
        <authorList>
            <person name="Dephoure N."/>
            <person name="Zhou C."/>
            <person name="Villen J."/>
            <person name="Beausoleil S.A."/>
            <person name="Bakalarski C.E."/>
            <person name="Elledge S.J."/>
            <person name="Gygi S.P."/>
        </authorList>
    </citation>
    <scope>IDENTIFICATION BY MASS SPECTROMETRY [LARGE SCALE ANALYSIS]</scope>
    <source>
        <tissue>Cervix carcinoma</tissue>
    </source>
</reference>
<reference key="14">
    <citation type="journal article" date="2009" name="Sci. Signal.">
        <title>Quantitative phosphoproteomic analysis of T cell receptor signaling reveals system-wide modulation of protein-protein interactions.</title>
        <authorList>
            <person name="Mayya V."/>
            <person name="Lundgren D.H."/>
            <person name="Hwang S.-I."/>
            <person name="Rezaul K."/>
            <person name="Wu L."/>
            <person name="Eng J.K."/>
            <person name="Rodionov V."/>
            <person name="Han D.K."/>
        </authorList>
    </citation>
    <scope>PHOSPHORYLATION [LARGE SCALE ANALYSIS] AT THR-581</scope>
    <scope>IDENTIFICATION BY MASS SPECTROMETRY [LARGE SCALE ANALYSIS]</scope>
    <source>
        <tissue>Leukemic T-cell</tissue>
    </source>
</reference>
<reference key="15">
    <citation type="journal article" date="2010" name="Sci. Signal.">
        <title>Quantitative phosphoproteomics reveals widespread full phosphorylation site occupancy during mitosis.</title>
        <authorList>
            <person name="Olsen J.V."/>
            <person name="Vermeulen M."/>
            <person name="Santamaria A."/>
            <person name="Kumar C."/>
            <person name="Miller M.L."/>
            <person name="Jensen L.J."/>
            <person name="Gnad F."/>
            <person name="Cox J."/>
            <person name="Jensen T.S."/>
            <person name="Nigg E.A."/>
            <person name="Brunak S."/>
            <person name="Mann M."/>
        </authorList>
    </citation>
    <scope>PHOSPHORYLATION [LARGE SCALE ANALYSIS] AT SER-560 AND THR-581</scope>
    <scope>IDENTIFICATION BY MASS SPECTROMETRY [LARGE SCALE ANALYSIS]</scope>
    <source>
        <tissue>Cervix carcinoma</tissue>
    </source>
</reference>
<reference key="16">
    <citation type="journal article" date="2011" name="BMC Syst. Biol.">
        <title>Initial characterization of the human central proteome.</title>
        <authorList>
            <person name="Burkard T.R."/>
            <person name="Planyavsky M."/>
            <person name="Kaupe I."/>
            <person name="Breitwieser F.P."/>
            <person name="Buerckstuemmer T."/>
            <person name="Bennett K.L."/>
            <person name="Superti-Furga G."/>
            <person name="Colinge J."/>
        </authorList>
    </citation>
    <scope>IDENTIFICATION BY MASS SPECTROMETRY [LARGE SCALE ANALYSIS]</scope>
</reference>
<reference key="17">
    <citation type="journal article" date="2013" name="J. Proteome Res.">
        <title>Toward a comprehensive characterization of a human cancer cell phosphoproteome.</title>
        <authorList>
            <person name="Zhou H."/>
            <person name="Di Palma S."/>
            <person name="Preisinger C."/>
            <person name="Peng M."/>
            <person name="Polat A.N."/>
            <person name="Heck A.J."/>
            <person name="Mohammed S."/>
        </authorList>
    </citation>
    <scope>PHOSPHORYLATION [LARGE SCALE ANALYSIS] AT SER-560 AND THR-581</scope>
    <scope>IDENTIFICATION BY MASS SPECTROMETRY [LARGE SCALE ANALYSIS]</scope>
    <source>
        <tissue>Cervix carcinoma</tissue>
        <tissue>Erythroleukemia</tissue>
    </source>
</reference>
<reference key="18">
    <citation type="journal article" date="2017" name="Cell">
        <title>Assembly and function of heterotypic ubiquitin chains in cell-cycle and protein quality control.</title>
        <authorList>
            <person name="Yau R.G."/>
            <person name="Doerner K."/>
            <person name="Castellanos E.R."/>
            <person name="Haakonsen D.L."/>
            <person name="Werner A."/>
            <person name="Wang N."/>
            <person name="Yang X.W."/>
            <person name="Martinez-Martin N."/>
            <person name="Matsumoto M.L."/>
            <person name="Dixit V.M."/>
            <person name="Rape M."/>
        </authorList>
    </citation>
    <scope>FUNCTION</scope>
    <scope>PATHWAY</scope>
</reference>
<reference key="19">
    <citation type="journal article" date="2022" name="Clin. Genet.">
        <title>A homozygous loss-of-function mutation in FBXO43 causes human non-obstructive azoospermia.</title>
        <authorList>
            <person name="Wu H."/>
            <person name="Zhang X."/>
            <person name="Shen Q."/>
            <person name="Liu Y."/>
            <person name="Gao Y."/>
            <person name="Wang G."/>
            <person name="Lv M."/>
            <person name="Hua R."/>
            <person name="Xu Y."/>
            <person name="Zhou P."/>
            <person name="Wei Z."/>
            <person name="Tao F."/>
            <person name="He X."/>
            <person name="Cao Y."/>
            <person name="Liu M."/>
        </authorList>
    </citation>
    <scope>INTERACTION WITH FBXO43</scope>
</reference>
<reference key="20">
    <citation type="journal article" date="2005" name="Mol. Cell">
        <title>Localization of the coactivator Cdh1 and the cullin subunit Apc2 in a cryo-electron microscopy model of vertebrate APC/C.</title>
        <authorList>
            <person name="Dube P."/>
            <person name="Herzog F."/>
            <person name="Gieffers C."/>
            <person name="Sander B."/>
            <person name="Riedel D."/>
            <person name="Mueller S.A."/>
            <person name="Engel A."/>
            <person name="Peters J.-M."/>
            <person name="Stark H."/>
        </authorList>
    </citation>
    <scope>STRUCTURE BY ELECTRON MICROSCOPY OF THE APC/C</scope>
</reference>
<reference key="21">
    <citation type="journal article" date="2009" name="Nat. Struct. Mol. Biol.">
        <title>Insights into anaphase promoting complex TPR subdomain assembly from a CDC26-APC6 structure.</title>
        <authorList>
            <person name="Wang J."/>
            <person name="Dye B.T."/>
            <person name="Rajashankar K.R."/>
            <person name="Kurinov I."/>
            <person name="Schulman B.A."/>
        </authorList>
    </citation>
    <scope>X-RAY CRYSTALLOGRAPHY (2.8 ANGSTROMS) OF 212-539 IN COMPLEX WITH CDC26</scope>
    <scope>TPR REPEATS</scope>
    <scope>SUBUNIT</scope>
</reference>
<reference key="22">
    <citation type="journal article" date="2014" name="Nature">
        <title>Molecular architecture and mechanism of the anaphase-promoting complex.</title>
        <authorList>
            <person name="Chang L."/>
            <person name="Zhang Z."/>
            <person name="Yang J."/>
            <person name="McLaughlin S.H."/>
            <person name="Barford D."/>
        </authorList>
    </citation>
    <scope>STRUCTURE BY ELECTRON MICROSCOPY (7.4 ANGSTROMS) OF THE APC/C</scope>
    <scope>SUBUNIT</scope>
</reference>
<reference evidence="15 16" key="23">
    <citation type="journal article" date="2015" name="Nature">
        <title>Atomic structure of the APC/C and its mechanism of protein ubiquitination.</title>
        <authorList>
            <person name="Chang L."/>
            <person name="Zhang Z."/>
            <person name="Yang J."/>
            <person name="McLaughlin S.H."/>
            <person name="Barford D."/>
        </authorList>
    </citation>
    <scope>STRUCTURE BY ELECTRON MICROSCOPY (3.60 ANGSTROMS) OF APC/C</scope>
    <scope>SUBUNIT</scope>
</reference>
<comment type="function">
    <text evidence="3 7">Component of the anaphase promoting complex/cyclosome (APC/C), a cell cycle-regulated E3 ubiquitin ligase that controls progression through mitosis and the G1 phase of the cell cycle (PubMed:18485873). The APC/C complex acts by mediating ubiquitination and subsequent degradation of target proteins: it mainly mediates the formation of 'Lys-11'-linked polyubiquitin chains and, to a lower extent, the formation of 'Lys-48'- and 'Lys-63'-linked polyubiquitin chains (PubMed:18485873). The APC/C complex catalyzes assembly of branched 'Lys-11'-/'Lys-48'-linked branched ubiquitin chains on target proteins (PubMed:29033132).</text>
</comment>
<comment type="pathway">
    <text evidence="3 7">Protein modification; protein ubiquitination.</text>
</comment>
<comment type="subunit">
    <text evidence="4 5 6 8 10 11">V-shaped homodimer. The mammalian APC/C is composed at least of 14 distinct subunits ANAPC1, ANAPC2, CDC27/APC3, ANAPC4, ANAPC5, CDC16/APC6, ANAPC7, CDC23/APC8, ANAPC10, ANAPC11, CDC26/APC12, ANAPC13, ANAPC15 and ANAPC16 that assemble into a complex of at least 19 chains with a combined molecular mass of around 1.2 MDa; APC/C interacts with FZR1 and FBXO5 (PubMed:25043029, PubMed:26083744). Interacts with PPP5C and CDC20 (PubMed:9405394, PubMed:9628895). Interacts with CDC26 (PubMed:19668213). Interacts with FBXO43.</text>
</comment>
<comment type="interaction">
    <interactant intactId="EBI-994830">
        <id>Q13042</id>
    </interactant>
    <interactant intactId="EBI-2555941">
        <id>Q8NHZ8</id>
        <label>CDC26</label>
    </interactant>
    <organismsDiffer>false</organismsDiffer>
    <experiments>19</experiments>
</comment>
<comment type="interaction">
    <interactant intactId="EBI-994830">
        <id>Q13042</id>
    </interactant>
    <interactant intactId="EBI-713568">
        <id>P45984</id>
        <label>MAPK9</label>
    </interactant>
    <organismsDiffer>false</organismsDiffer>
    <experiments>3</experiments>
</comment>
<comment type="interaction">
    <interactant intactId="EBI-994830">
        <id>Q13042</id>
    </interactant>
    <interactant intactId="EBI-372899">
        <id>Q13148</id>
        <label>TARDBP</label>
    </interactant>
    <organismsDiffer>false</organismsDiffer>
    <experiments>3</experiments>
</comment>
<comment type="interaction">
    <interactant intactId="EBI-15798699">
        <id>Q13042-1</id>
    </interactant>
    <interactant intactId="EBI-2555941">
        <id>Q8NHZ8</id>
        <label>CDC26</label>
    </interactant>
    <organismsDiffer>false</organismsDiffer>
    <experiments>5</experiments>
</comment>
<comment type="interaction">
    <interactant intactId="EBI-10974085">
        <id>Q13042-2</id>
    </interactant>
    <interactant intactId="EBI-372899">
        <id>Q13148</id>
        <label>TARDBP</label>
    </interactant>
    <organismsDiffer>false</organismsDiffer>
    <experiments>3</experiments>
</comment>
<comment type="subcellular location">
    <subcellularLocation>
        <location evidence="9">Cytoplasm</location>
        <location evidence="9">Cytoskeleton</location>
        <location evidence="9">Microtubule organizing center</location>
        <location evidence="9">Centrosome</location>
    </subcellularLocation>
    <subcellularLocation>
        <location evidence="9">Cytoplasm</location>
        <location evidence="9">Cytoskeleton</location>
        <location evidence="9">Spindle</location>
    </subcellularLocation>
    <text evidence="9">Colocalizes with CDC27 to the centrosome at all stages of the cell cycle and to the mitotic spindle.</text>
</comment>
<comment type="alternative products">
    <event type="alternative splicing"/>
    <isoform>
        <id>Q13042-1</id>
        <name>1</name>
        <sequence type="displayed"/>
    </isoform>
    <isoform>
        <id>Q13042-2</id>
        <name>2</name>
        <sequence type="described" ref="VSP_008427"/>
    </isoform>
    <isoform>
        <id>Q13042-3</id>
        <name>3</name>
        <sequence type="described" ref="VSP_008427 VSP_008428"/>
    </isoform>
    <isoform>
        <id>Q13042-4</id>
        <name>4</name>
        <sequence type="described" ref="VSP_057270"/>
    </isoform>
</comment>
<comment type="domain">
    <text evidence="4">TPR repeats 1-7 mediate homodimerization, while the C-terminal TPR repeats bind to CDC26, burying its hydrophobic N-terminus.</text>
</comment>
<comment type="PTM">
    <text evidence="2">Phosphorylated. Phosphorylation on Ser-560 occurs specifically during mitosis.</text>
</comment>
<comment type="similarity">
    <text evidence="14">Belongs to the APC6/CDC16 family.</text>
</comment>
<organism>
    <name type="scientific">Homo sapiens</name>
    <name type="common">Human</name>
    <dbReference type="NCBI Taxonomy" id="9606"/>
    <lineage>
        <taxon>Eukaryota</taxon>
        <taxon>Metazoa</taxon>
        <taxon>Chordata</taxon>
        <taxon>Craniata</taxon>
        <taxon>Vertebrata</taxon>
        <taxon>Euteleostomi</taxon>
        <taxon>Mammalia</taxon>
        <taxon>Eutheria</taxon>
        <taxon>Euarchontoglires</taxon>
        <taxon>Primates</taxon>
        <taxon>Haplorrhini</taxon>
        <taxon>Catarrhini</taxon>
        <taxon>Hominidae</taxon>
        <taxon>Homo</taxon>
    </lineage>
</organism>
<sequence>MNLERLRKRVRQYLDQQQYQSALFWADKVASLSREEPQDIYWLAQCLYLTAQYHRAAHALRSRKLDKLYEACRYLAARCHYAAKEHQQALDVLDMEEPINKRLFEKYLKDESGFKDPSSDWEMSQSSIKSSICLLRGKIYDALDNRTLATYSYKEALKLDVYCFEAFDLLTSHHMLTAQEEKELLESLPLSKLCNEEQELLRFLFENKLKKYNKPSETVIPESVDGLQENLDVVVSLAERHYYNCDFKMCYKLTSVVMEKDPFHASCLPVHIGTLVELNKANELFYLSHKLVDLYPSNPVSWFAVGCYYLMVGHKNEHARRYLSKATTLEKTYGPAWIAYGHSFAVESEHDQAMAAYFTAAQLMKGCHLPMLYIGLEYGLTNNSKLAERFFSQALSIAPEDPFVMHEVGVVAFQNGEWKTAEKWFLDALEKIKAIGNEVTVDKWEPLLNNLGHVCRKLKKYAEALDYHRQALVLIPQNASTYSAIGYIHSLMGNFENAVDYFHTALGLRRDDTFSVTMLGHCIEMYIGDSEAYIGADIKDKLKCYDFDVHTMKTLKNIISPPWDFREFEVEKQTAEETGLTPLETSRKTPDSRPSLEETFEIEMNESDMMLETSMSDHST</sequence>
<accession>Q13042</accession>
<accession>A2A365</accession>
<accession>Q5T8C8</accession>
<accession>Q7Z651</accession>
<accession>Q96AE6</accession>
<accession>Q9Y564</accession>
<dbReference type="EMBL" id="U18291">
    <property type="protein sequence ID" value="AAC50200.1"/>
    <property type="molecule type" value="mRNA"/>
</dbReference>
<dbReference type="EMBL" id="AF164598">
    <property type="protein sequence ID" value="AAD45156.1"/>
    <property type="molecule type" value="mRNA"/>
</dbReference>
<dbReference type="EMBL" id="AY599074">
    <property type="protein sequence ID" value="AAS94323.1"/>
    <property type="molecule type" value="Genomic_DNA"/>
</dbReference>
<dbReference type="EMBL" id="AL160396">
    <property type="status" value="NOT_ANNOTATED_CDS"/>
    <property type="molecule type" value="Genomic_DNA"/>
</dbReference>
<dbReference type="EMBL" id="CH471085">
    <property type="protein sequence ID" value="EAX09237.1"/>
    <property type="molecule type" value="Genomic_DNA"/>
</dbReference>
<dbReference type="EMBL" id="CH471085">
    <property type="protein sequence ID" value="EAX09244.1"/>
    <property type="molecule type" value="Genomic_DNA"/>
</dbReference>
<dbReference type="EMBL" id="CH471085">
    <property type="protein sequence ID" value="EAX09245.1"/>
    <property type="molecule type" value="Genomic_DNA"/>
</dbReference>
<dbReference type="EMBL" id="BC010875">
    <property type="protein sequence ID" value="AAH10875.1"/>
    <property type="molecule type" value="mRNA"/>
</dbReference>
<dbReference type="EMBL" id="BC017244">
    <property type="protein sequence ID" value="AAH17244.1"/>
    <property type="molecule type" value="mRNA"/>
</dbReference>
<dbReference type="CCDS" id="CCDS81786.1">
    <molecule id="Q13042-2"/>
</dbReference>
<dbReference type="CCDS" id="CCDS81787.1">
    <molecule id="Q13042-4"/>
</dbReference>
<dbReference type="CCDS" id="CCDS9542.2">
    <molecule id="Q13042-1"/>
</dbReference>
<dbReference type="PIR" id="A56519">
    <property type="entry name" value="A56519"/>
</dbReference>
<dbReference type="RefSeq" id="NP_001072113.1">
    <molecule id="Q13042-1"/>
    <property type="nucleotide sequence ID" value="NM_001078645.3"/>
</dbReference>
<dbReference type="RefSeq" id="NP_001305446.1">
    <molecule id="Q13042-2"/>
    <property type="nucleotide sequence ID" value="NM_001318517.3"/>
</dbReference>
<dbReference type="RefSeq" id="NP_001305447.1">
    <molecule id="Q13042-3"/>
    <property type="nucleotide sequence ID" value="NM_001318518.3"/>
</dbReference>
<dbReference type="RefSeq" id="NP_001317030.1">
    <molecule id="Q13042-2"/>
    <property type="nucleotide sequence ID" value="NM_001330101.2"/>
</dbReference>
<dbReference type="RefSeq" id="NP_001317033.1">
    <molecule id="Q13042-4"/>
    <property type="nucleotide sequence ID" value="NM_001330104.2"/>
</dbReference>
<dbReference type="RefSeq" id="NP_001317034.1">
    <molecule id="Q13042-4"/>
    <property type="nucleotide sequence ID" value="NM_001330105.2"/>
</dbReference>
<dbReference type="RefSeq" id="NP_003894.3">
    <molecule id="Q13042-1"/>
    <property type="nucleotide sequence ID" value="NM_003903.4"/>
</dbReference>
<dbReference type="RefSeq" id="XP_016876322.1">
    <property type="nucleotide sequence ID" value="XM_017020833.1"/>
</dbReference>
<dbReference type="RefSeq" id="XP_047286710.1">
    <molecule id="Q13042-4"/>
    <property type="nucleotide sequence ID" value="XM_047430754.1"/>
</dbReference>
<dbReference type="RefSeq" id="XP_054231123.1">
    <molecule id="Q13042-4"/>
    <property type="nucleotide sequence ID" value="XM_054375148.1"/>
</dbReference>
<dbReference type="PDB" id="3HYM">
    <property type="method" value="X-ray"/>
    <property type="resolution" value="2.80 A"/>
    <property type="chains" value="B/D/F/H/J/L=212-539"/>
</dbReference>
<dbReference type="PDB" id="4UI9">
    <property type="method" value="EM"/>
    <property type="resolution" value="3.60 A"/>
    <property type="chains" value="J/K=1-620"/>
</dbReference>
<dbReference type="PDB" id="5A31">
    <property type="method" value="EM"/>
    <property type="resolution" value="4.30 A"/>
    <property type="chains" value="J/K=1-620"/>
</dbReference>
<dbReference type="PDB" id="5G04">
    <property type="method" value="EM"/>
    <property type="resolution" value="4.00 A"/>
    <property type="chains" value="J/K=1-620"/>
</dbReference>
<dbReference type="PDB" id="5G05">
    <property type="method" value="EM"/>
    <property type="resolution" value="3.40 A"/>
    <property type="chains" value="J/K=1-620"/>
</dbReference>
<dbReference type="PDB" id="5KHR">
    <property type="method" value="EM"/>
    <property type="resolution" value="6.10 A"/>
    <property type="chains" value="J/K=1-620"/>
</dbReference>
<dbReference type="PDB" id="5KHU">
    <property type="method" value="EM"/>
    <property type="resolution" value="4.80 A"/>
    <property type="chains" value="J/K=1-620"/>
</dbReference>
<dbReference type="PDB" id="5L9T">
    <property type="method" value="EM"/>
    <property type="resolution" value="6.40 A"/>
    <property type="chains" value="J/K=1-620"/>
</dbReference>
<dbReference type="PDB" id="5L9U">
    <property type="method" value="EM"/>
    <property type="resolution" value="6.40 A"/>
    <property type="chains" value="J/K=1-620"/>
</dbReference>
<dbReference type="PDB" id="5LCW">
    <property type="method" value="EM"/>
    <property type="resolution" value="4.00 A"/>
    <property type="chains" value="J/K=1-620"/>
</dbReference>
<dbReference type="PDB" id="6Q6G">
    <property type="method" value="EM"/>
    <property type="resolution" value="3.20 A"/>
    <property type="chains" value="K/Q=1-620"/>
</dbReference>
<dbReference type="PDB" id="6Q6H">
    <property type="method" value="EM"/>
    <property type="resolution" value="3.20 A"/>
    <property type="chains" value="K/Q=1-620"/>
</dbReference>
<dbReference type="PDB" id="6TLJ">
    <property type="method" value="EM"/>
    <property type="resolution" value="3.80 A"/>
    <property type="chains" value="J/K=1-620"/>
</dbReference>
<dbReference type="PDB" id="6TM5">
    <property type="method" value="EM"/>
    <property type="resolution" value="3.90 A"/>
    <property type="chains" value="J/K=1-620"/>
</dbReference>
<dbReference type="PDB" id="6TNT">
    <property type="method" value="EM"/>
    <property type="resolution" value="3.78 A"/>
    <property type="chains" value="J/K=1-620"/>
</dbReference>
<dbReference type="PDB" id="8PKP">
    <property type="method" value="EM"/>
    <property type="resolution" value="3.20 A"/>
    <property type="chains" value="K/Q=1-620"/>
</dbReference>
<dbReference type="PDB" id="8TAR">
    <property type="method" value="EM"/>
    <property type="resolution" value="4.00 A"/>
    <property type="chains" value="K/S=1-620"/>
</dbReference>
<dbReference type="PDB" id="8TAU">
    <property type="method" value="EM"/>
    <property type="resolution" value="3.50 A"/>
    <property type="chains" value="K/S=1-620"/>
</dbReference>
<dbReference type="PDB" id="9GAW">
    <property type="method" value="EM"/>
    <property type="resolution" value="2.90 A"/>
    <property type="chains" value="K/Q=1-620"/>
</dbReference>
<dbReference type="PDBsum" id="3HYM"/>
<dbReference type="PDBsum" id="4UI9"/>
<dbReference type="PDBsum" id="5A31"/>
<dbReference type="PDBsum" id="5G04"/>
<dbReference type="PDBsum" id="5G05"/>
<dbReference type="PDBsum" id="5KHR"/>
<dbReference type="PDBsum" id="5KHU"/>
<dbReference type="PDBsum" id="5L9T"/>
<dbReference type="PDBsum" id="5L9U"/>
<dbReference type="PDBsum" id="5LCW"/>
<dbReference type="PDBsum" id="6Q6G"/>
<dbReference type="PDBsum" id="6Q6H"/>
<dbReference type="PDBsum" id="6TLJ"/>
<dbReference type="PDBsum" id="6TM5"/>
<dbReference type="PDBsum" id="6TNT"/>
<dbReference type="PDBsum" id="8PKP"/>
<dbReference type="PDBsum" id="8TAR"/>
<dbReference type="PDBsum" id="8TAU"/>
<dbReference type="PDBsum" id="9GAW"/>
<dbReference type="EMDB" id="EMD-10516"/>
<dbReference type="EMDB" id="EMD-10518"/>
<dbReference type="EMDB" id="EMD-10536"/>
<dbReference type="EMDB" id="EMD-13931"/>
<dbReference type="EMDB" id="EMD-17751"/>
<dbReference type="EMDB" id="EMD-19711"/>
<dbReference type="EMDB" id="EMD-2924"/>
<dbReference type="EMDB" id="EMD-2925"/>
<dbReference type="EMDB" id="EMD-3385"/>
<dbReference type="EMDB" id="EMD-3386"/>
<dbReference type="EMDB" id="EMD-3387"/>
<dbReference type="EMDB" id="EMD-3388"/>
<dbReference type="EMDB" id="EMD-3389"/>
<dbReference type="EMDB" id="EMD-3390"/>
<dbReference type="EMDB" id="EMD-4037"/>
<dbReference type="EMDB" id="EMD-41140"/>
<dbReference type="EMDB" id="EMD-41142"/>
<dbReference type="EMDB" id="EMD-4465"/>
<dbReference type="EMDB" id="EMD-4466"/>
<dbReference type="EMDB" id="EMD-4467"/>
<dbReference type="EMDB" id="EMD-51190"/>
<dbReference type="SMR" id="Q13042"/>
<dbReference type="BioGRID" id="114400">
    <property type="interactions" value="264"/>
</dbReference>
<dbReference type="ComplexPortal" id="CPX-1860">
    <property type="entry name" value="Anaphase-promoting core complex"/>
</dbReference>
<dbReference type="CORUM" id="Q13042"/>
<dbReference type="DIP" id="DIP-36423N"/>
<dbReference type="FunCoup" id="Q13042">
    <property type="interactions" value="3912"/>
</dbReference>
<dbReference type="IntAct" id="Q13042">
    <property type="interactions" value="187"/>
</dbReference>
<dbReference type="MINT" id="Q13042"/>
<dbReference type="STRING" id="9606.ENSP00000348554"/>
<dbReference type="GlyGen" id="Q13042">
    <property type="glycosylation" value="2 sites, 9 N-linked glycans (1 site), 1 O-linked glycan (1 site)"/>
</dbReference>
<dbReference type="iPTMnet" id="Q13042"/>
<dbReference type="PhosphoSitePlus" id="Q13042"/>
<dbReference type="BioMuta" id="CDC16"/>
<dbReference type="DMDM" id="37537763"/>
<dbReference type="jPOST" id="Q13042"/>
<dbReference type="MassIVE" id="Q13042"/>
<dbReference type="PaxDb" id="9606-ENSP00000353549"/>
<dbReference type="PeptideAtlas" id="Q13042"/>
<dbReference type="ProteomicsDB" id="59116">
    <molecule id="Q13042-1"/>
</dbReference>
<dbReference type="ProteomicsDB" id="59117">
    <molecule id="Q13042-2"/>
</dbReference>
<dbReference type="ProteomicsDB" id="59118">
    <molecule id="Q13042-3"/>
</dbReference>
<dbReference type="ProteomicsDB" id="69376"/>
<dbReference type="Pumba" id="Q13042"/>
<dbReference type="Antibodypedia" id="11890">
    <property type="antibodies" value="419 antibodies from 40 providers"/>
</dbReference>
<dbReference type="DNASU" id="8881"/>
<dbReference type="Ensembl" id="ENST00000252457.9">
    <molecule id="Q13042-2"/>
    <property type="protein sequence ID" value="ENSP00000252457.5"/>
    <property type="gene ID" value="ENSG00000130177.16"/>
</dbReference>
<dbReference type="Ensembl" id="ENST00000356221.8">
    <molecule id="Q13042-1"/>
    <property type="protein sequence ID" value="ENSP00000348554.3"/>
    <property type="gene ID" value="ENSG00000130177.16"/>
</dbReference>
<dbReference type="Ensembl" id="ENST00000360383.7">
    <molecule id="Q13042-1"/>
    <property type="protein sequence ID" value="ENSP00000353549.3"/>
    <property type="gene ID" value="ENSG00000130177.16"/>
</dbReference>
<dbReference type="Ensembl" id="ENST00000375308.5">
    <molecule id="Q13042-4"/>
    <property type="protein sequence ID" value="ENSP00000364457.1"/>
    <property type="gene ID" value="ENSG00000130177.16"/>
</dbReference>
<dbReference type="Ensembl" id="ENST00000375310.5">
    <molecule id="Q13042-4"/>
    <property type="protein sequence ID" value="ENSP00000364459.1"/>
    <property type="gene ID" value="ENSG00000130177.16"/>
</dbReference>
<dbReference type="GeneID" id="8881"/>
<dbReference type="KEGG" id="hsa:8881"/>
<dbReference type="MANE-Select" id="ENST00000356221.8">
    <property type="protein sequence ID" value="ENSP00000348554.3"/>
    <property type="RefSeq nucleotide sequence ID" value="NM_001078645.3"/>
    <property type="RefSeq protein sequence ID" value="NP_001072113.1"/>
</dbReference>
<dbReference type="UCSC" id="uc001vuk.1">
    <molecule id="Q13042-1"/>
    <property type="organism name" value="human"/>
</dbReference>
<dbReference type="AGR" id="HGNC:1720"/>
<dbReference type="CTD" id="8881"/>
<dbReference type="DisGeNET" id="8881"/>
<dbReference type="GeneCards" id="CDC16"/>
<dbReference type="HGNC" id="HGNC:1720">
    <property type="gene designation" value="CDC16"/>
</dbReference>
<dbReference type="HPA" id="ENSG00000130177">
    <property type="expression patterns" value="Low tissue specificity"/>
</dbReference>
<dbReference type="MIM" id="603461">
    <property type="type" value="gene"/>
</dbReference>
<dbReference type="neXtProt" id="NX_Q13042"/>
<dbReference type="OpenTargets" id="ENSG00000130177"/>
<dbReference type="PharmGKB" id="PA26256"/>
<dbReference type="VEuPathDB" id="HostDB:ENSG00000130177"/>
<dbReference type="eggNOG" id="KOG1173">
    <property type="taxonomic scope" value="Eukaryota"/>
</dbReference>
<dbReference type="GeneTree" id="ENSGT00950000182950"/>
<dbReference type="HOGENOM" id="CLU_011751_3_2_1"/>
<dbReference type="InParanoid" id="Q13042"/>
<dbReference type="OMA" id="DPFHNNA"/>
<dbReference type="OrthoDB" id="10006270at2759"/>
<dbReference type="PAN-GO" id="Q13042">
    <property type="GO annotations" value="7 GO annotations based on evolutionary models"/>
</dbReference>
<dbReference type="PhylomeDB" id="Q13042"/>
<dbReference type="TreeFam" id="TF101054"/>
<dbReference type="PathwayCommons" id="Q13042"/>
<dbReference type="Reactome" id="R-HSA-141430">
    <property type="pathway name" value="Inactivation of APC/C via direct inhibition of the APC/C complex"/>
</dbReference>
<dbReference type="Reactome" id="R-HSA-174048">
    <property type="pathway name" value="APC/C:Cdc20 mediated degradation of Cyclin B"/>
</dbReference>
<dbReference type="Reactome" id="R-HSA-174084">
    <property type="pathway name" value="Autodegradation of Cdh1 by Cdh1:APC/C"/>
</dbReference>
<dbReference type="Reactome" id="R-HSA-174154">
    <property type="pathway name" value="APC/C:Cdc20 mediated degradation of Securin"/>
</dbReference>
<dbReference type="Reactome" id="R-HSA-174178">
    <property type="pathway name" value="APC/C:Cdh1 mediated degradation of Cdc20 and other APC/C:Cdh1 targeted proteins in late mitosis/early G1"/>
</dbReference>
<dbReference type="Reactome" id="R-HSA-174184">
    <property type="pathway name" value="Cdc20:Phospho-APC/C mediated degradation of Cyclin A"/>
</dbReference>
<dbReference type="Reactome" id="R-HSA-176407">
    <property type="pathway name" value="Conversion from APC/C:Cdc20 to APC/C:Cdh1 in late anaphase"/>
</dbReference>
<dbReference type="Reactome" id="R-HSA-176408">
    <property type="pathway name" value="Regulation of APC/C activators between G1/S and early anaphase"/>
</dbReference>
<dbReference type="Reactome" id="R-HSA-176409">
    <property type="pathway name" value="APC/C:Cdc20 mediated degradation of mitotic proteins"/>
</dbReference>
<dbReference type="Reactome" id="R-HSA-176412">
    <property type="pathway name" value="Phosphorylation of the APC/C"/>
</dbReference>
<dbReference type="Reactome" id="R-HSA-179409">
    <property type="pathway name" value="APC-Cdc20 mediated degradation of Nek2A"/>
</dbReference>
<dbReference type="Reactome" id="R-HSA-2467813">
    <property type="pathway name" value="Separation of Sister Chromatids"/>
</dbReference>
<dbReference type="Reactome" id="R-HSA-2559582">
    <property type="pathway name" value="Senescence-Associated Secretory Phenotype (SASP)"/>
</dbReference>
<dbReference type="Reactome" id="R-HSA-68867">
    <property type="pathway name" value="Assembly of the pre-replicative complex"/>
</dbReference>
<dbReference type="Reactome" id="R-HSA-69017">
    <property type="pathway name" value="CDK-mediated phosphorylation and removal of Cdc6"/>
</dbReference>
<dbReference type="Reactome" id="R-HSA-8853884">
    <property type="pathway name" value="Transcriptional Regulation by VENTX"/>
</dbReference>
<dbReference type="Reactome" id="R-HSA-9687136">
    <property type="pathway name" value="Aberrant regulation of mitotic exit in cancer due to RB1 defects"/>
</dbReference>
<dbReference type="Reactome" id="R-HSA-983168">
    <property type="pathway name" value="Antigen processing: Ubiquitination &amp; Proteasome degradation"/>
</dbReference>
<dbReference type="SignaLink" id="Q13042"/>
<dbReference type="SIGNOR" id="Q13042"/>
<dbReference type="UniPathway" id="UPA00143"/>
<dbReference type="BioGRID-ORCS" id="8881">
    <property type="hits" value="854 hits in 1176 CRISPR screens"/>
</dbReference>
<dbReference type="CD-CODE" id="8C2F96ED">
    <property type="entry name" value="Centrosome"/>
</dbReference>
<dbReference type="ChiTaRS" id="CDC16">
    <property type="organism name" value="human"/>
</dbReference>
<dbReference type="EvolutionaryTrace" id="Q13042"/>
<dbReference type="GeneWiki" id="CDC16"/>
<dbReference type="GenomeRNAi" id="8881"/>
<dbReference type="Pharos" id="Q13042">
    <property type="development level" value="Tbio"/>
</dbReference>
<dbReference type="PRO" id="PR:Q13042"/>
<dbReference type="Proteomes" id="UP000005640">
    <property type="component" value="Chromosome 13"/>
</dbReference>
<dbReference type="RNAct" id="Q13042">
    <property type="molecule type" value="protein"/>
</dbReference>
<dbReference type="Bgee" id="ENSG00000130177">
    <property type="expression patterns" value="Expressed in right uterine tube and 210 other cell types or tissues"/>
</dbReference>
<dbReference type="ExpressionAtlas" id="Q13042">
    <property type="expression patterns" value="baseline and differential"/>
</dbReference>
<dbReference type="GO" id="GO:0005680">
    <property type="term" value="C:anaphase-promoting complex"/>
    <property type="evidence" value="ECO:0000314"/>
    <property type="project" value="UniProtKB"/>
</dbReference>
<dbReference type="GO" id="GO:0005813">
    <property type="term" value="C:centrosome"/>
    <property type="evidence" value="ECO:0000314"/>
    <property type="project" value="MGI"/>
</dbReference>
<dbReference type="GO" id="GO:0005737">
    <property type="term" value="C:cytoplasm"/>
    <property type="evidence" value="ECO:0000314"/>
    <property type="project" value="LIFEdb"/>
</dbReference>
<dbReference type="GO" id="GO:0005829">
    <property type="term" value="C:cytosol"/>
    <property type="evidence" value="ECO:0000304"/>
    <property type="project" value="Reactome"/>
</dbReference>
<dbReference type="GO" id="GO:0072686">
    <property type="term" value="C:mitotic spindle"/>
    <property type="evidence" value="ECO:0000314"/>
    <property type="project" value="MGI"/>
</dbReference>
<dbReference type="GO" id="GO:0005654">
    <property type="term" value="C:nucleoplasm"/>
    <property type="evidence" value="ECO:0000304"/>
    <property type="project" value="Reactome"/>
</dbReference>
<dbReference type="GO" id="GO:0031145">
    <property type="term" value="P:anaphase-promoting complex-dependent catabolic process"/>
    <property type="evidence" value="ECO:0000314"/>
    <property type="project" value="UniProtKB"/>
</dbReference>
<dbReference type="GO" id="GO:0051301">
    <property type="term" value="P:cell division"/>
    <property type="evidence" value="ECO:0000318"/>
    <property type="project" value="GO_Central"/>
</dbReference>
<dbReference type="GO" id="GO:0045842">
    <property type="term" value="P:positive regulation of mitotic metaphase/anaphase transition"/>
    <property type="evidence" value="ECO:0000318"/>
    <property type="project" value="GO_Central"/>
</dbReference>
<dbReference type="GO" id="GO:0141198">
    <property type="term" value="P:protein branched polyubiquitination"/>
    <property type="evidence" value="ECO:0000314"/>
    <property type="project" value="UniProtKB"/>
</dbReference>
<dbReference type="GO" id="GO:0070979">
    <property type="term" value="P:protein K11-linked ubiquitination"/>
    <property type="evidence" value="ECO:0000314"/>
    <property type="project" value="UniProtKB"/>
</dbReference>
<dbReference type="GO" id="GO:0070936">
    <property type="term" value="P:protein K48-linked ubiquitination"/>
    <property type="evidence" value="ECO:0000314"/>
    <property type="project" value="UniProtKB"/>
</dbReference>
<dbReference type="GO" id="GO:0016567">
    <property type="term" value="P:protein ubiquitination"/>
    <property type="evidence" value="ECO:0000318"/>
    <property type="project" value="GO_Central"/>
</dbReference>
<dbReference type="GO" id="GO:0051445">
    <property type="term" value="P:regulation of meiotic cell cycle"/>
    <property type="evidence" value="ECO:0000303"/>
    <property type="project" value="ComplexPortal"/>
</dbReference>
<dbReference type="GO" id="GO:0007346">
    <property type="term" value="P:regulation of mitotic cell cycle"/>
    <property type="evidence" value="ECO:0000303"/>
    <property type="project" value="ComplexPortal"/>
</dbReference>
<dbReference type="DisProt" id="DP01452"/>
<dbReference type="Gene3D" id="1.25.40.10">
    <property type="entry name" value="Tetratricopeptide repeat domain"/>
    <property type="match status" value="1"/>
</dbReference>
<dbReference type="InterPro" id="IPR011990">
    <property type="entry name" value="TPR-like_helical_dom_sf"/>
</dbReference>
<dbReference type="InterPro" id="IPR019734">
    <property type="entry name" value="TPR_rpt"/>
</dbReference>
<dbReference type="PANTHER" id="PTHR12558">
    <property type="entry name" value="CELL DIVISION CYCLE 16,23,27"/>
    <property type="match status" value="1"/>
</dbReference>
<dbReference type="PANTHER" id="PTHR12558:SF9">
    <property type="entry name" value="CELL DIVISION CYCLE PROTEIN 16 HOMOLOG"/>
    <property type="match status" value="1"/>
</dbReference>
<dbReference type="Pfam" id="PF12895">
    <property type="entry name" value="ANAPC3"/>
    <property type="match status" value="1"/>
</dbReference>
<dbReference type="Pfam" id="PF13424">
    <property type="entry name" value="TPR_12"/>
    <property type="match status" value="1"/>
</dbReference>
<dbReference type="SMART" id="SM00028">
    <property type="entry name" value="TPR"/>
    <property type="match status" value="6"/>
</dbReference>
<dbReference type="SUPFAM" id="SSF48452">
    <property type="entry name" value="TPR-like"/>
    <property type="match status" value="2"/>
</dbReference>
<dbReference type="PROSITE" id="PS50005">
    <property type="entry name" value="TPR"/>
    <property type="match status" value="5"/>
</dbReference>
<dbReference type="PROSITE" id="PS50293">
    <property type="entry name" value="TPR_REGION"/>
    <property type="match status" value="1"/>
</dbReference>
<feature type="chain" id="PRO_0000106267" description="Cell division cycle protein 16 homolog">
    <location>
        <begin position="1"/>
        <end position="620"/>
    </location>
</feature>
<feature type="repeat" description="TPR 1">
    <location>
        <begin position="4"/>
        <end position="33"/>
    </location>
</feature>
<feature type="repeat" description="TPR 2">
    <location>
        <begin position="37"/>
        <end position="62"/>
    </location>
</feature>
<feature type="repeat" description="TPR 3">
    <location>
        <begin position="70"/>
        <end position="93"/>
    </location>
</feature>
<feature type="repeat" description="TPR 4">
    <location>
        <begin position="128"/>
        <end position="159"/>
    </location>
</feature>
<feature type="repeat" description="TPR 5">
    <location>
        <begin position="164"/>
        <end position="187"/>
    </location>
</feature>
<feature type="repeat" description="TPR 6">
    <location>
        <begin position="198"/>
        <end position="222"/>
    </location>
</feature>
<feature type="repeat" description="TPR 7">
    <location>
        <begin position="232"/>
        <end position="260"/>
    </location>
</feature>
<feature type="repeat" description="TPR 8">
    <location>
        <begin position="267"/>
        <end position="294"/>
    </location>
</feature>
<feature type="repeat" description="TPR 9">
    <location>
        <begin position="299"/>
        <end position="329"/>
    </location>
</feature>
<feature type="repeat" description="TPR 10">
    <location>
        <begin position="334"/>
        <end position="362"/>
    </location>
</feature>
<feature type="repeat" description="TPR 11">
    <location>
        <begin position="369"/>
        <end position="397"/>
    </location>
</feature>
<feature type="repeat" description="TPR 12">
    <location>
        <begin position="402"/>
        <end position="434"/>
    </location>
</feature>
<feature type="repeat" description="TPR 13">
    <location>
        <begin position="442"/>
        <end position="474"/>
    </location>
</feature>
<feature type="repeat" description="TPR 14">
    <location>
        <begin position="479"/>
        <end position="508"/>
    </location>
</feature>
<feature type="region of interest" description="Disordered" evidence="1">
    <location>
        <begin position="574"/>
        <end position="599"/>
    </location>
</feature>
<feature type="compositionally biased region" description="Basic and acidic residues" evidence="1">
    <location>
        <begin position="585"/>
        <end position="596"/>
    </location>
</feature>
<feature type="modified residue" description="Phosphoserine" evidence="2">
    <location>
        <position position="112"/>
    </location>
</feature>
<feature type="modified residue" description="Phosphoserine" evidence="2">
    <location>
        <position position="490"/>
    </location>
</feature>
<feature type="modified residue" description="Phosphoserine" evidence="2 18 20 21">
    <location>
        <position position="560"/>
    </location>
</feature>
<feature type="modified residue" description="Phosphothreonine" evidence="2 17 18 19 20 21">
    <location>
        <position position="581"/>
    </location>
</feature>
<feature type="modified residue" description="Phosphoserine" evidence="2">
    <location>
        <position position="595"/>
    </location>
</feature>
<feature type="modified residue" description="Phosphothreonine" evidence="2">
    <location>
        <position position="599"/>
    </location>
</feature>
<feature type="splice variant" id="VSP_057270" description="In isoform 4." evidence="12">
    <location>
        <begin position="1"/>
        <end position="94"/>
    </location>
</feature>
<feature type="splice variant" id="VSP_008427" description="In isoform 2 and isoform 3." evidence="13">
    <location>
        <position position="36"/>
    </location>
</feature>
<feature type="splice variant" id="VSP_008428" description="In isoform 3." evidence="14">
    <location>
        <begin position="367"/>
        <end position="417"/>
    </location>
</feature>
<feature type="sequence conflict" description="In Ref. 1; AAC50200." evidence="14" ref="1">
    <original>K</original>
    <variation>Q</variation>
    <location>
        <position position="138"/>
    </location>
</feature>
<feature type="sequence conflict" description="In Ref. 2; AAD45156." evidence="14" ref="2">
    <original>P</original>
    <variation>L</variation>
    <location>
        <position position="299"/>
    </location>
</feature>
<feature type="helix" evidence="27">
    <location>
        <begin position="4"/>
        <end position="15"/>
    </location>
</feature>
<feature type="helix" evidence="27">
    <location>
        <begin position="20"/>
        <end position="32"/>
    </location>
</feature>
<feature type="turn" evidence="26">
    <location>
        <begin position="33"/>
        <end position="35"/>
    </location>
</feature>
<feature type="helix" evidence="27">
    <location>
        <begin position="37"/>
        <end position="49"/>
    </location>
</feature>
<feature type="helix" evidence="27">
    <location>
        <begin position="53"/>
        <end position="61"/>
    </location>
</feature>
<feature type="turn" evidence="27">
    <location>
        <begin position="62"/>
        <end position="64"/>
    </location>
</feature>
<feature type="turn" evidence="27">
    <location>
        <begin position="66"/>
        <end position="68"/>
    </location>
</feature>
<feature type="helix" evidence="27">
    <location>
        <begin position="70"/>
        <end position="82"/>
    </location>
</feature>
<feature type="helix" evidence="27">
    <location>
        <begin position="86"/>
        <end position="94"/>
    </location>
</feature>
<feature type="helix" evidence="27">
    <location>
        <begin position="128"/>
        <end position="142"/>
    </location>
</feature>
<feature type="helix" evidence="27">
    <location>
        <begin position="146"/>
        <end position="159"/>
    </location>
</feature>
<feature type="helix" evidence="27">
    <location>
        <begin position="164"/>
        <end position="170"/>
    </location>
</feature>
<feature type="strand" evidence="27">
    <location>
        <begin position="171"/>
        <end position="174"/>
    </location>
</feature>
<feature type="helix" evidence="27">
    <location>
        <begin position="178"/>
        <end position="187"/>
    </location>
</feature>
<feature type="helix" evidence="27">
    <location>
        <begin position="190"/>
        <end position="192"/>
    </location>
</feature>
<feature type="helix" evidence="27">
    <location>
        <begin position="195"/>
        <end position="209"/>
    </location>
</feature>
<feature type="helix" evidence="27">
    <location>
        <begin position="215"/>
        <end position="217"/>
    </location>
</feature>
<feature type="strand" evidence="24">
    <location>
        <begin position="222"/>
        <end position="224"/>
    </location>
</feature>
<feature type="helix" evidence="27">
    <location>
        <begin position="227"/>
        <end position="229"/>
    </location>
</feature>
<feature type="turn" evidence="25">
    <location>
        <begin position="231"/>
        <end position="233"/>
    </location>
</feature>
<feature type="helix" evidence="22">
    <location>
        <begin position="234"/>
        <end position="243"/>
    </location>
</feature>
<feature type="helix" evidence="22">
    <location>
        <begin position="247"/>
        <end position="260"/>
    </location>
</feature>
<feature type="turn" evidence="22">
    <location>
        <begin position="265"/>
        <end position="267"/>
    </location>
</feature>
<feature type="helix" evidence="22">
    <location>
        <begin position="268"/>
        <end position="278"/>
    </location>
</feature>
<feature type="helix" evidence="22">
    <location>
        <begin position="281"/>
        <end position="294"/>
    </location>
</feature>
<feature type="strand" evidence="23">
    <location>
        <begin position="296"/>
        <end position="298"/>
    </location>
</feature>
<feature type="helix" evidence="22">
    <location>
        <begin position="300"/>
        <end position="311"/>
    </location>
</feature>
<feature type="helix" evidence="22">
    <location>
        <begin position="316"/>
        <end position="327"/>
    </location>
</feature>
<feature type="turn" evidence="23">
    <location>
        <begin position="330"/>
        <end position="332"/>
    </location>
</feature>
<feature type="helix" evidence="22">
    <location>
        <begin position="335"/>
        <end position="347"/>
    </location>
</feature>
<feature type="helix" evidence="22">
    <location>
        <begin position="350"/>
        <end position="363"/>
    </location>
</feature>
<feature type="turn" evidence="22">
    <location>
        <begin position="364"/>
        <end position="366"/>
    </location>
</feature>
<feature type="helix" evidence="22">
    <location>
        <begin position="369"/>
        <end position="380"/>
    </location>
</feature>
<feature type="helix" evidence="22">
    <location>
        <begin position="384"/>
        <end position="395"/>
    </location>
</feature>
<feature type="helix" evidence="22">
    <location>
        <begin position="402"/>
        <end position="414"/>
    </location>
</feature>
<feature type="helix" evidence="22">
    <location>
        <begin position="418"/>
        <end position="432"/>
    </location>
</feature>
<feature type="turn" evidence="22">
    <location>
        <begin position="433"/>
        <end position="435"/>
    </location>
</feature>
<feature type="turn" evidence="22">
    <location>
        <begin position="440"/>
        <end position="443"/>
    </location>
</feature>
<feature type="helix" evidence="22">
    <location>
        <begin position="446"/>
        <end position="457"/>
    </location>
</feature>
<feature type="helix" evidence="22">
    <location>
        <begin position="461"/>
        <end position="474"/>
    </location>
</feature>
<feature type="strand" evidence="24">
    <location>
        <begin position="475"/>
        <end position="477"/>
    </location>
</feature>
<feature type="helix" evidence="22">
    <location>
        <begin position="480"/>
        <end position="492"/>
    </location>
</feature>
<feature type="helix" evidence="22">
    <location>
        <begin position="495"/>
        <end position="503"/>
    </location>
</feature>
<feature type="turn" evidence="22">
    <location>
        <begin position="504"/>
        <end position="508"/>
    </location>
</feature>
<feature type="helix" evidence="22">
    <location>
        <begin position="513"/>
        <end position="524"/>
    </location>
</feature>
<feature type="turn" evidence="22">
    <location>
        <begin position="525"/>
        <end position="528"/>
    </location>
</feature>
<feature type="helix" evidence="27">
    <location>
        <begin position="555"/>
        <end position="559"/>
    </location>
</feature>
<proteinExistence type="evidence at protein level"/>
<name>CDC16_HUMAN</name>